<organism>
    <name type="scientific">Influenza A virus (strain A/Duck/Hokkaido/8/1980 H3N8)</name>
    <dbReference type="NCBI Taxonomy" id="387207"/>
    <lineage>
        <taxon>Viruses</taxon>
        <taxon>Riboviria</taxon>
        <taxon>Orthornavirae</taxon>
        <taxon>Negarnaviricota</taxon>
        <taxon>Polyploviricotina</taxon>
        <taxon>Insthoviricetes</taxon>
        <taxon>Articulavirales</taxon>
        <taxon>Orthomyxoviridae</taxon>
        <taxon>Alphainfluenzavirus</taxon>
        <taxon>Alphainfluenzavirus influenzae</taxon>
        <taxon>Influenza A virus</taxon>
    </lineage>
</organism>
<keyword id="KW-1167">Clathrin- and caveolin-independent endocytosis of virus by host</keyword>
<keyword id="KW-1165">Clathrin-mediated endocytosis of virus by host</keyword>
<keyword id="KW-1015">Disulfide bond</keyword>
<keyword id="KW-1170">Fusion of virus membrane with host endosomal membrane</keyword>
<keyword id="KW-1168">Fusion of virus membrane with host membrane</keyword>
<keyword id="KW-0325">Glycoprotein</keyword>
<keyword id="KW-0348">Hemagglutinin</keyword>
<keyword id="KW-1032">Host cell membrane</keyword>
<keyword id="KW-1043">Host membrane</keyword>
<keyword id="KW-0945">Host-virus interaction</keyword>
<keyword id="KW-0449">Lipoprotein</keyword>
<keyword id="KW-0472">Membrane</keyword>
<keyword id="KW-0564">Palmitate</keyword>
<keyword id="KW-0732">Signal</keyword>
<keyword id="KW-0812">Transmembrane</keyword>
<keyword id="KW-1133">Transmembrane helix</keyword>
<keyword id="KW-1161">Viral attachment to host cell</keyword>
<keyword id="KW-0261">Viral envelope protein</keyword>
<keyword id="KW-1162">Viral penetration into host cytoplasm</keyword>
<keyword id="KW-0946">Virion</keyword>
<keyword id="KW-1164">Virus endocytosis by host</keyword>
<keyword id="KW-1160">Virus entry into host cell</keyword>
<reference key="1">
    <citation type="submission" date="2006-09" db="EMBL/GenBank/DDBJ databases">
        <title>Evolutionary characterization of H3N8 viruses isolated from ducks in Hokkaido.</title>
        <authorList>
            <person name="Kida H."/>
            <person name="Sakoda Y."/>
        </authorList>
    </citation>
    <scope>NUCLEOTIDE SEQUENCE [GENOMIC RNA]</scope>
</reference>
<reference key="2">
    <citation type="journal article" date="1987" name="Virology">
        <title>Antigenic and genetic conservation of H3 influenza virus in wild ducks.</title>
        <authorList>
            <person name="Kida H."/>
            <person name="Kawaoka Y."/>
            <person name="Naeve C.W."/>
            <person name="Webster R.G."/>
        </authorList>
    </citation>
    <scope>NUCLEOTIDE SEQUENCE [GENOMIC RNA] OF 17-566</scope>
</reference>
<reference key="3">
    <citation type="journal article" date="1999" name="J. Virol.">
        <title>Protection against a lethal avian influenza A virus in a mammalian system.</title>
        <authorList>
            <person name="Riberdy J.M."/>
            <person name="Flynn K.J."/>
            <person name="Stech J."/>
            <person name="Webster R.G."/>
            <person name="Altman J.D."/>
            <person name="Doherty P.C."/>
        </authorList>
    </citation>
    <scope>NUCLEOTIDE SEQUENCE [MRNA] OF 17-344</scope>
</reference>
<protein>
    <recommendedName>
        <fullName evidence="1">Hemagglutinin</fullName>
    </recommendedName>
    <component>
        <recommendedName>
            <fullName evidence="1">Hemagglutinin HA1 chain</fullName>
        </recommendedName>
    </component>
    <component>
        <recommendedName>
            <fullName evidence="1">Hemagglutinin HA2 chain</fullName>
        </recommendedName>
    </component>
</protein>
<feature type="signal peptide" evidence="1">
    <location>
        <begin position="1"/>
        <end position="16"/>
    </location>
</feature>
<feature type="chain" id="PRO_0000440486" description="Hemagglutinin" evidence="1">
    <location>
        <begin position="17"/>
        <end position="566"/>
    </location>
</feature>
<feature type="chain" id="PRO_0000038918" description="Hemagglutinin HA1 chain">
    <location>
        <begin position="17"/>
        <end position="344"/>
    </location>
</feature>
<feature type="chain" id="PRO_0000038919" description="Hemagglutinin HA2 chain" evidence="1">
    <location>
        <begin position="346"/>
        <end position="566"/>
    </location>
</feature>
<feature type="topological domain" description="Extracellular" evidence="1">
    <location>
        <begin position="17"/>
        <end position="530"/>
    </location>
</feature>
<feature type="transmembrane region" description="Helical" evidence="1">
    <location>
        <begin position="531"/>
        <end position="551"/>
    </location>
</feature>
<feature type="topological domain" description="Cytoplasmic" evidence="1">
    <location>
        <begin position="552"/>
        <end position="566"/>
    </location>
</feature>
<feature type="site" description="Cleavage; by host" evidence="1">
    <location>
        <begin position="345"/>
        <end position="346"/>
    </location>
</feature>
<feature type="lipid moiety-binding region" description="S-palmitoyl cysteine; by host" evidence="1">
    <location>
        <position position="555"/>
    </location>
</feature>
<feature type="lipid moiety-binding region" description="S-palmitoyl cysteine; by host" evidence="1">
    <location>
        <position position="562"/>
    </location>
</feature>
<feature type="lipid moiety-binding region" description="S-palmitoyl cysteine; by host" evidence="1">
    <location>
        <position position="565"/>
    </location>
</feature>
<feature type="glycosylation site" description="N-linked (GlcNAc...) asparagine; by host" evidence="1">
    <location>
        <position position="24"/>
    </location>
</feature>
<feature type="glycosylation site" description="N-linked (GlcNAc...) asparagine; by host" evidence="1">
    <location>
        <position position="38"/>
    </location>
</feature>
<feature type="glycosylation site" description="N-linked (GlcNAc...) asparagine; by host" evidence="1">
    <location>
        <position position="54"/>
    </location>
</feature>
<feature type="glycosylation site" description="N-linked (GlcNAc...) asparagine; by host" evidence="1">
    <location>
        <position position="181"/>
    </location>
</feature>
<feature type="glycosylation site" description="N-linked (GlcNAc...) asparagine; by host" evidence="1">
    <location>
        <position position="301"/>
    </location>
</feature>
<feature type="glycosylation site" description="N-linked (GlcNAc...) asparagine; by host" evidence="1">
    <location>
        <position position="499"/>
    </location>
</feature>
<feature type="disulfide bond" description="Interchain (between HA1 and HA2 chains)" evidence="1">
    <location>
        <begin position="30"/>
        <end position="482"/>
    </location>
</feature>
<feature type="disulfide bond" evidence="1">
    <location>
        <begin position="68"/>
        <end position="293"/>
    </location>
</feature>
<feature type="disulfide bond" evidence="1">
    <location>
        <begin position="80"/>
        <end position="92"/>
    </location>
</feature>
<feature type="disulfide bond" evidence="1">
    <location>
        <begin position="113"/>
        <end position="155"/>
    </location>
</feature>
<feature type="disulfide bond" evidence="1">
    <location>
        <begin position="297"/>
        <end position="321"/>
    </location>
</feature>
<feature type="disulfide bond" evidence="1">
    <location>
        <begin position="489"/>
        <end position="493"/>
    </location>
</feature>
<feature type="sequence conflict" description="In Ref. 2; AAA43144." evidence="2" ref="2">
    <original>E</original>
    <variation>K</variation>
    <location>
        <position position="135"/>
    </location>
</feature>
<feature type="sequence conflict" description="In Ref. 2; AAA43144." evidence="2" ref="2">
    <original>N</original>
    <variation>K</variation>
    <location>
        <position position="153"/>
    </location>
</feature>
<feature type="sequence conflict" description="In Ref. 2; AAA43144." evidence="2" ref="2">
    <original>G</original>
    <variation>R</variation>
    <location>
        <position position="244"/>
    </location>
</feature>
<feature type="sequence conflict" description="In Ref. 3; AAC31556." evidence="2" ref="3">
    <original>K</original>
    <variation>E</variation>
    <location>
        <position position="254"/>
    </location>
</feature>
<feature type="sequence conflict" description="In Ref. 2; AAA43144." evidence="2" ref="2">
    <original>EL</original>
    <variation>DV</variation>
    <location>
        <begin position="442"/>
        <end position="443"/>
    </location>
</feature>
<evidence type="ECO:0000255" key="1">
    <source>
        <dbReference type="HAMAP-Rule" id="MF_04072"/>
    </source>
</evidence>
<evidence type="ECO:0000305" key="2"/>
<comment type="function">
    <text>Binds to sialic acid-containing receptors on the cell surface, bringing about the attachment of the virus particle to the cell. This attachment induces virion internalization of about two third of the virus particles through clathrin-dependent endocytosis and about one third through a clathrin- and caveolin-independent pathway. Plays a major role in the determination of host range restriction and virulence. Class I viral fusion protein. Responsible for penetration of the virus into the cell cytoplasm by mediating the fusion of the membrane of the endocytosed virus particle with the endosomal membrane. Low pH in endosomes induces an irreversible conformational change in HA2, releasing the fusion hydrophobic peptide. Several trimers are required to form a competent fusion pore.</text>
</comment>
<comment type="function">
    <text evidence="1">Binds to sialic acid-containing receptors on the cell surface, bringing about the attachment of the virus particle to the cell. This attachment induces virion internalization either through clathrin-dependent endocytosis or through clathrin- and caveolin-independent pathway. Plays a major role in the determination of host range restriction and virulence. Class I viral fusion protein. Responsible for penetration of the virus into the cell cytoplasm by mediating the fusion of the membrane of the endocytosed virus particle with the endosomal membrane. Low pH in endosomes induces an irreversible conformational change in HA2, releasing the fusion hydrophobic peptide. Several trimers are required to form a competent fusion pore.</text>
</comment>
<comment type="subunit">
    <text evidence="1">Homotrimer of disulfide-linked HA1-HA2.</text>
</comment>
<comment type="subcellular location">
    <subcellularLocation>
        <location evidence="1">Virion membrane</location>
        <topology evidence="1">Single-pass type I membrane protein</topology>
    </subcellularLocation>
    <subcellularLocation>
        <location evidence="1">Host apical cell membrane</location>
        <topology evidence="1">Single-pass type I membrane protein</topology>
    </subcellularLocation>
    <text evidence="1">Targeted to the apical plasma membrane in epithelial polarized cells through a signal present in the transmembrane domain. Associated with glycosphingolipid- and cholesterol-enriched detergent-resistant lipid rafts.</text>
</comment>
<comment type="PTM">
    <text evidence="1">Palmitoylated.</text>
</comment>
<comment type="PTM">
    <text evidence="1">In natural infection, inactive HA is matured into HA1 and HA2 outside the cell by one or more trypsin-like, arginine-specific endoprotease secreted by the bronchial epithelial cells. One identified protease that may be involved in this process is secreted in lungs by club cells.</text>
</comment>
<comment type="miscellaneous">
    <text>Major glycoprotein, comprises over 80% of the envelope proteins present in virus particle.</text>
</comment>
<comment type="miscellaneous">
    <text>The extent of infection into host organism is determined by HA. Influenza viruses bud from the apical surface of polarized epithelial cells (e.g. bronchial epithelial cells) into lumen of lungs and are therefore usually pneumotropic. The reason is that HA is cleaved by tryptase clara which is restricted to lungs. However, HAs of H5 and H7 pantropic avian viruses subtypes can be cleaved by furin and subtilisin-type enzymes, allowing the virus to grow in other organs than lungs.</text>
</comment>
<comment type="miscellaneous">
    <text evidence="2">The influenza A genome consist of 8 RNA segments. Genetic variation of hemagglutinin and/or neuraminidase genes results in the emergence of new influenza strains. The mechanism of variation can be the result of point mutations or the result of genetic reassortment between segments of two different strains.</text>
</comment>
<comment type="similarity">
    <text evidence="1">Belongs to the influenza viruses hemagglutinin family.</text>
</comment>
<gene>
    <name evidence="1" type="primary">HA</name>
</gene>
<accession>P12583</accession>
<accession>O90384</accession>
<accession>Q08IH2</accession>
<accession>Q84011</accession>
<sequence length="566" mass="63379">MKTIIALSYIFCLAFSQDLPGNDNSTATLCLGHHAVPNGTIVKTITDDQIEVTNATELVQSSSTGKICNNPHRILDGRDCTLIDALLGDPHCDVFQDETWDLFVERSNAFSNCYPYDVPDYASLRSLVASSGTLEFITEGFTWTGVTQNGGSNACKRGPASGFFSRLNWLTKSGSTYPVLNVTMPNNDNFDKLYIWGVHHPSTNQEQTNLYVQASGRVTVSTRRSQQTIIPNIGSRPWVRGQSGGISIYWTIVKPGDVLVINSNGNLIAPRGYFKMRTGKSSIMRSDAPIDTCVSECITPNGSIPNDKPFQNVNKITYGACPKYVKQNTLKLATGMRNVPEKQARGLFGAIAGFIENGWEGMIDGWYGFRHQNSEGTGQAADLKSTQAAIDQINGKLNRVIEKTNEKFHQIEKEFSEVEGRIQDLEKYVEDTKIDLWSYNAELLVALENQHTIDLTDSEMNKLFEKTRRQLRENAEDMGNGCFKIYHKCDNACIESIRNGTYDHDIYRDEALNNRFQIKGVELKSGYKDWILWISFAISCFLLCVVLLGFIMWACQRGNIRCNICI</sequence>
<dbReference type="EMBL" id="AB275283">
    <property type="protein sequence ID" value="BAF33059.2"/>
    <property type="molecule type" value="Genomic_RNA"/>
</dbReference>
<dbReference type="EMBL" id="M16738">
    <property type="protein sequence ID" value="AAA43144.1"/>
    <property type="molecule type" value="Genomic_RNA"/>
</dbReference>
<dbReference type="EMBL" id="AF079570">
    <property type="protein sequence ID" value="AAC31556.1"/>
    <property type="molecule type" value="mRNA"/>
</dbReference>
<dbReference type="PIR" id="B27813">
    <property type="entry name" value="HMIV80"/>
</dbReference>
<dbReference type="SMR" id="P12583"/>
<dbReference type="GlyCosmos" id="P12583">
    <property type="glycosylation" value="6 sites, No reported glycans"/>
</dbReference>
<dbReference type="Proteomes" id="UP000008578">
    <property type="component" value="Genome"/>
</dbReference>
<dbReference type="GO" id="GO:0020002">
    <property type="term" value="C:host cell plasma membrane"/>
    <property type="evidence" value="ECO:0007669"/>
    <property type="project" value="UniProtKB-SubCell"/>
</dbReference>
<dbReference type="GO" id="GO:0016020">
    <property type="term" value="C:membrane"/>
    <property type="evidence" value="ECO:0007669"/>
    <property type="project" value="UniProtKB-UniRule"/>
</dbReference>
<dbReference type="GO" id="GO:0019031">
    <property type="term" value="C:viral envelope"/>
    <property type="evidence" value="ECO:0007669"/>
    <property type="project" value="UniProtKB-UniRule"/>
</dbReference>
<dbReference type="GO" id="GO:0055036">
    <property type="term" value="C:virion membrane"/>
    <property type="evidence" value="ECO:0007669"/>
    <property type="project" value="UniProtKB-SubCell"/>
</dbReference>
<dbReference type="GO" id="GO:0046789">
    <property type="term" value="F:host cell surface receptor binding"/>
    <property type="evidence" value="ECO:0007669"/>
    <property type="project" value="UniProtKB-UniRule"/>
</dbReference>
<dbReference type="GO" id="GO:0075512">
    <property type="term" value="P:clathrin-dependent endocytosis of virus by host cell"/>
    <property type="evidence" value="ECO:0007669"/>
    <property type="project" value="UniProtKB-UniRule"/>
</dbReference>
<dbReference type="GO" id="GO:0039654">
    <property type="term" value="P:fusion of virus membrane with host endosome membrane"/>
    <property type="evidence" value="ECO:0007669"/>
    <property type="project" value="UniProtKB-UniRule"/>
</dbReference>
<dbReference type="GO" id="GO:0019064">
    <property type="term" value="P:fusion of virus membrane with host plasma membrane"/>
    <property type="evidence" value="ECO:0007669"/>
    <property type="project" value="InterPro"/>
</dbReference>
<dbReference type="GO" id="GO:0046761">
    <property type="term" value="P:viral budding from plasma membrane"/>
    <property type="evidence" value="ECO:0007669"/>
    <property type="project" value="UniProtKB-UniRule"/>
</dbReference>
<dbReference type="GO" id="GO:0019062">
    <property type="term" value="P:virion attachment to host cell"/>
    <property type="evidence" value="ECO:0007669"/>
    <property type="project" value="UniProtKB-KW"/>
</dbReference>
<dbReference type="FunFam" id="3.90.20.10:FF:000001">
    <property type="entry name" value="Hemagglutinin"/>
    <property type="match status" value="1"/>
</dbReference>
<dbReference type="FunFam" id="3.90.209.20:FF:000001">
    <property type="entry name" value="Hemagglutinin"/>
    <property type="match status" value="1"/>
</dbReference>
<dbReference type="Gene3D" id="3.90.20.10">
    <property type="match status" value="1"/>
</dbReference>
<dbReference type="Gene3D" id="3.90.209.20">
    <property type="match status" value="1"/>
</dbReference>
<dbReference type="HAMAP" id="MF_04072">
    <property type="entry name" value="INFV_HEMA"/>
    <property type="match status" value="1"/>
</dbReference>
<dbReference type="InterPro" id="IPR008980">
    <property type="entry name" value="Capsid_hemagglutn"/>
</dbReference>
<dbReference type="InterPro" id="IPR013828">
    <property type="entry name" value="Hemagglutn_HA1_a/b_dom_sf"/>
</dbReference>
<dbReference type="InterPro" id="IPR000149">
    <property type="entry name" value="Hemagglutn_influenz_A"/>
</dbReference>
<dbReference type="InterPro" id="IPR001364">
    <property type="entry name" value="Hemagglutn_influenz_A/B"/>
</dbReference>
<dbReference type="Pfam" id="PF00509">
    <property type="entry name" value="Hemagglutinin"/>
    <property type="match status" value="1"/>
</dbReference>
<dbReference type="PRINTS" id="PR00330">
    <property type="entry name" value="HEMAGGLUTN1"/>
</dbReference>
<dbReference type="PRINTS" id="PR00329">
    <property type="entry name" value="HEMAGGLUTN12"/>
</dbReference>
<dbReference type="SUPFAM" id="SSF58064">
    <property type="entry name" value="Influenza hemagglutinin (stalk)"/>
    <property type="match status" value="1"/>
</dbReference>
<dbReference type="SUPFAM" id="SSF49818">
    <property type="entry name" value="Viral protein domain"/>
    <property type="match status" value="1"/>
</dbReference>
<organismHost>
    <name type="scientific">Aves</name>
    <dbReference type="NCBI Taxonomy" id="8782"/>
</organismHost>
<organismHost>
    <name type="scientific">Equus caballus</name>
    <name type="common">Horse</name>
    <dbReference type="NCBI Taxonomy" id="9796"/>
</organismHost>
<proteinExistence type="evidence at transcript level"/>
<name>HEMA_I80A6</name>